<accession>Q1PFD1</accession>
<accession>Q9FWT1</accession>
<name>BLH11_ARATH</name>
<feature type="chain" id="PRO_0000315467" description="BEL1-like homeodomain protein 11">
    <location>
        <begin position="1"/>
        <end position="290"/>
    </location>
</feature>
<feature type="DNA-binding region" description="Homeobox" evidence="2">
    <location>
        <begin position="202"/>
        <end position="264"/>
    </location>
</feature>
<feature type="region of interest" description="SR/KY domain">
    <location>
        <begin position="20"/>
        <end position="36"/>
    </location>
</feature>
<feature type="region of interest" description="BELL domain">
    <location>
        <begin position="81"/>
        <end position="152"/>
    </location>
</feature>
<keyword id="KW-0238">DNA-binding</keyword>
<keyword id="KW-0371">Homeobox</keyword>
<keyword id="KW-0539">Nucleus</keyword>
<keyword id="KW-1185">Reference proteome</keyword>
<keyword id="KW-0804">Transcription</keyword>
<keyword id="KW-0805">Transcription regulation</keyword>
<organism>
    <name type="scientific">Arabidopsis thaliana</name>
    <name type="common">Mouse-ear cress</name>
    <dbReference type="NCBI Taxonomy" id="3702"/>
    <lineage>
        <taxon>Eukaryota</taxon>
        <taxon>Viridiplantae</taxon>
        <taxon>Streptophyta</taxon>
        <taxon>Embryophyta</taxon>
        <taxon>Tracheophyta</taxon>
        <taxon>Spermatophyta</taxon>
        <taxon>Magnoliopsida</taxon>
        <taxon>eudicotyledons</taxon>
        <taxon>Gunneridae</taxon>
        <taxon>Pentapetalae</taxon>
        <taxon>rosids</taxon>
        <taxon>malvids</taxon>
        <taxon>Brassicales</taxon>
        <taxon>Brassicaceae</taxon>
        <taxon>Camelineae</taxon>
        <taxon>Arabidopsis</taxon>
    </lineage>
</organism>
<sequence length="290" mass="33024">MEDFRVRHECSSLRGTLLDSRYAKAVQCLVEEVIDIGGREVELCNNILINQLFPGRRRPGFALSSEIKSELCSSGFMSLPENHEIHIKITKLLSLLQQVEERFEQYCNQLEQVISSFEEIAGEGSSKVYTGLALQAMTRHFGSLEEAIISQLNSVRRRFIISHQDVPKIISSGLSQLSLFDGNTTSSSLQRLGLVQGPQRHAWKPIRGLPETSVAILRAWLFQHFLHPYPNEAEKLVLASQTGLSKNQVSNWFINARVRLWKPMIEEMYREEFGDSLDESMQREANDDSN</sequence>
<comment type="subunit">
    <text evidence="1">May form heterodimeric complexes with TALE/KNOX proteins.</text>
</comment>
<comment type="subcellular location">
    <subcellularLocation>
        <location evidence="3">Nucleus</location>
    </subcellularLocation>
</comment>
<comment type="domain">
    <text>The SR/KY and BELL domains are responsive for the interaction between the TALE/BELL proteins and the TALE/KNOX proteins.</text>
</comment>
<comment type="similarity">
    <text evidence="3">Belongs to the TALE/BELL homeobox family.</text>
</comment>
<comment type="sequence caution" evidence="3">
    <conflict type="erroneous gene model prediction">
        <sequence resource="EMBL-CDS" id="AAG13063"/>
    </conflict>
</comment>
<gene>
    <name type="primary">BLH11</name>
    <name type="ordered locus">At1g75430</name>
    <name type="ORF">F1B16.4</name>
</gene>
<evidence type="ECO:0000250" key="1"/>
<evidence type="ECO:0000255" key="2">
    <source>
        <dbReference type="PROSITE-ProRule" id="PRU00108"/>
    </source>
</evidence>
<evidence type="ECO:0000305" key="3"/>
<proteinExistence type="evidence at transcript level"/>
<dbReference type="EMBL" id="AC023754">
    <property type="protein sequence ID" value="AAG13063.1"/>
    <property type="status" value="ALT_SEQ"/>
    <property type="molecule type" value="Genomic_DNA"/>
</dbReference>
<dbReference type="EMBL" id="CP002684">
    <property type="protein sequence ID" value="AEE35719.1"/>
    <property type="molecule type" value="Genomic_DNA"/>
</dbReference>
<dbReference type="EMBL" id="DQ446432">
    <property type="protein sequence ID" value="ABE65775.1"/>
    <property type="molecule type" value="mRNA"/>
</dbReference>
<dbReference type="PIR" id="H96784">
    <property type="entry name" value="H96784"/>
</dbReference>
<dbReference type="RefSeq" id="NP_177676.2">
    <property type="nucleotide sequence ID" value="NM_106197.3"/>
</dbReference>
<dbReference type="SMR" id="Q1PFD1"/>
<dbReference type="FunCoup" id="Q1PFD1">
    <property type="interactions" value="228"/>
</dbReference>
<dbReference type="STRING" id="3702.Q1PFD1"/>
<dbReference type="PaxDb" id="3702-AT1G75430.1"/>
<dbReference type="ProteomicsDB" id="240733"/>
<dbReference type="EnsemblPlants" id="AT1G75430.1">
    <property type="protein sequence ID" value="AT1G75430.1"/>
    <property type="gene ID" value="AT1G75430"/>
</dbReference>
<dbReference type="GeneID" id="843879"/>
<dbReference type="Gramene" id="AT1G75430.1">
    <property type="protein sequence ID" value="AT1G75430.1"/>
    <property type="gene ID" value="AT1G75430"/>
</dbReference>
<dbReference type="KEGG" id="ath:AT1G75430"/>
<dbReference type="Araport" id="AT1G75430"/>
<dbReference type="TAIR" id="AT1G75430">
    <property type="gene designation" value="BLH11"/>
</dbReference>
<dbReference type="eggNOG" id="KOG0773">
    <property type="taxonomic scope" value="Eukaryota"/>
</dbReference>
<dbReference type="HOGENOM" id="CLU_011058_5_0_1"/>
<dbReference type="InParanoid" id="Q1PFD1"/>
<dbReference type="OMA" id="SHECSSI"/>
<dbReference type="OrthoDB" id="10056939at2759"/>
<dbReference type="PhylomeDB" id="Q1PFD1"/>
<dbReference type="PRO" id="PR:Q1PFD1"/>
<dbReference type="Proteomes" id="UP000006548">
    <property type="component" value="Chromosome 1"/>
</dbReference>
<dbReference type="ExpressionAtlas" id="Q1PFD1">
    <property type="expression patterns" value="baseline and differential"/>
</dbReference>
<dbReference type="GO" id="GO:0005634">
    <property type="term" value="C:nucleus"/>
    <property type="evidence" value="ECO:0007669"/>
    <property type="project" value="UniProtKB-SubCell"/>
</dbReference>
<dbReference type="GO" id="GO:0003677">
    <property type="term" value="F:DNA binding"/>
    <property type="evidence" value="ECO:0007669"/>
    <property type="project" value="UniProtKB-KW"/>
</dbReference>
<dbReference type="GO" id="GO:0003700">
    <property type="term" value="F:DNA-binding transcription factor activity"/>
    <property type="evidence" value="ECO:0000250"/>
    <property type="project" value="TAIR"/>
</dbReference>
<dbReference type="CDD" id="cd00086">
    <property type="entry name" value="homeodomain"/>
    <property type="match status" value="1"/>
</dbReference>
<dbReference type="Gene3D" id="1.10.10.60">
    <property type="entry name" value="Homeodomain-like"/>
    <property type="match status" value="1"/>
</dbReference>
<dbReference type="InterPro" id="IPR001356">
    <property type="entry name" value="HD"/>
</dbReference>
<dbReference type="InterPro" id="IPR009057">
    <property type="entry name" value="Homeodomain-like_sf"/>
</dbReference>
<dbReference type="InterPro" id="IPR008422">
    <property type="entry name" value="KN_HD"/>
</dbReference>
<dbReference type="InterPro" id="IPR006563">
    <property type="entry name" value="POX_dom"/>
</dbReference>
<dbReference type="InterPro" id="IPR050224">
    <property type="entry name" value="TALE_homeobox"/>
</dbReference>
<dbReference type="PANTHER" id="PTHR11850">
    <property type="entry name" value="HOMEOBOX PROTEIN TRANSCRIPTION FACTORS"/>
    <property type="match status" value="1"/>
</dbReference>
<dbReference type="Pfam" id="PF05920">
    <property type="entry name" value="Homeobox_KN"/>
    <property type="match status" value="1"/>
</dbReference>
<dbReference type="Pfam" id="PF07526">
    <property type="entry name" value="POX"/>
    <property type="match status" value="1"/>
</dbReference>
<dbReference type="SMART" id="SM00389">
    <property type="entry name" value="HOX"/>
    <property type="match status" value="1"/>
</dbReference>
<dbReference type="SMART" id="SM00574">
    <property type="entry name" value="POX"/>
    <property type="match status" value="1"/>
</dbReference>
<dbReference type="SUPFAM" id="SSF46689">
    <property type="entry name" value="Homeodomain-like"/>
    <property type="match status" value="1"/>
</dbReference>
<dbReference type="PROSITE" id="PS00027">
    <property type="entry name" value="HOMEOBOX_1"/>
    <property type="match status" value="1"/>
</dbReference>
<dbReference type="PROSITE" id="PS50071">
    <property type="entry name" value="HOMEOBOX_2"/>
    <property type="match status" value="1"/>
</dbReference>
<protein>
    <recommendedName>
        <fullName>BEL1-like homeodomain protein 11</fullName>
        <shortName>BEL1-like protein 11</shortName>
    </recommendedName>
</protein>
<reference key="1">
    <citation type="journal article" date="2000" name="Nature">
        <title>Sequence and analysis of chromosome 1 of the plant Arabidopsis thaliana.</title>
        <authorList>
            <person name="Theologis A."/>
            <person name="Ecker J.R."/>
            <person name="Palm C.J."/>
            <person name="Federspiel N.A."/>
            <person name="Kaul S."/>
            <person name="White O."/>
            <person name="Alonso J."/>
            <person name="Altafi H."/>
            <person name="Araujo R."/>
            <person name="Bowman C.L."/>
            <person name="Brooks S.Y."/>
            <person name="Buehler E."/>
            <person name="Chan A."/>
            <person name="Chao Q."/>
            <person name="Chen H."/>
            <person name="Cheuk R.F."/>
            <person name="Chin C.W."/>
            <person name="Chung M.K."/>
            <person name="Conn L."/>
            <person name="Conway A.B."/>
            <person name="Conway A.R."/>
            <person name="Creasy T.H."/>
            <person name="Dewar K."/>
            <person name="Dunn P."/>
            <person name="Etgu P."/>
            <person name="Feldblyum T.V."/>
            <person name="Feng J.-D."/>
            <person name="Fong B."/>
            <person name="Fujii C.Y."/>
            <person name="Gill J.E."/>
            <person name="Goldsmith A.D."/>
            <person name="Haas B."/>
            <person name="Hansen N.F."/>
            <person name="Hughes B."/>
            <person name="Huizar L."/>
            <person name="Hunter J.L."/>
            <person name="Jenkins J."/>
            <person name="Johnson-Hopson C."/>
            <person name="Khan S."/>
            <person name="Khaykin E."/>
            <person name="Kim C.J."/>
            <person name="Koo H.L."/>
            <person name="Kremenetskaia I."/>
            <person name="Kurtz D.B."/>
            <person name="Kwan A."/>
            <person name="Lam B."/>
            <person name="Langin-Hooper S."/>
            <person name="Lee A."/>
            <person name="Lee J.M."/>
            <person name="Lenz C.A."/>
            <person name="Li J.H."/>
            <person name="Li Y.-P."/>
            <person name="Lin X."/>
            <person name="Liu S.X."/>
            <person name="Liu Z.A."/>
            <person name="Luros J.S."/>
            <person name="Maiti R."/>
            <person name="Marziali A."/>
            <person name="Militscher J."/>
            <person name="Miranda M."/>
            <person name="Nguyen M."/>
            <person name="Nierman W.C."/>
            <person name="Osborne B.I."/>
            <person name="Pai G."/>
            <person name="Peterson J."/>
            <person name="Pham P.K."/>
            <person name="Rizzo M."/>
            <person name="Rooney T."/>
            <person name="Rowley D."/>
            <person name="Sakano H."/>
            <person name="Salzberg S.L."/>
            <person name="Schwartz J.R."/>
            <person name="Shinn P."/>
            <person name="Southwick A.M."/>
            <person name="Sun H."/>
            <person name="Tallon L.J."/>
            <person name="Tambunga G."/>
            <person name="Toriumi M.J."/>
            <person name="Town C.D."/>
            <person name="Utterback T."/>
            <person name="Van Aken S."/>
            <person name="Vaysberg M."/>
            <person name="Vysotskaia V.S."/>
            <person name="Walker M."/>
            <person name="Wu D."/>
            <person name="Yu G."/>
            <person name="Fraser C.M."/>
            <person name="Venter J.C."/>
            <person name="Davis R.W."/>
        </authorList>
    </citation>
    <scope>NUCLEOTIDE SEQUENCE [LARGE SCALE GENOMIC DNA]</scope>
    <source>
        <strain>cv. Columbia</strain>
    </source>
</reference>
<reference key="2">
    <citation type="journal article" date="2017" name="Plant J.">
        <title>Araport11: a complete reannotation of the Arabidopsis thaliana reference genome.</title>
        <authorList>
            <person name="Cheng C.Y."/>
            <person name="Krishnakumar V."/>
            <person name="Chan A.P."/>
            <person name="Thibaud-Nissen F."/>
            <person name="Schobel S."/>
            <person name="Town C.D."/>
        </authorList>
    </citation>
    <scope>GENOME REANNOTATION</scope>
    <source>
        <strain>cv. Columbia</strain>
    </source>
</reference>
<reference key="3">
    <citation type="journal article" date="2006" name="Plant Biotechnol. J.">
        <title>Simultaneous high-throughput recombinational cloning of open reading frames in closed and open configurations.</title>
        <authorList>
            <person name="Underwood B.A."/>
            <person name="Vanderhaeghen R."/>
            <person name="Whitford R."/>
            <person name="Town C.D."/>
            <person name="Hilson P."/>
        </authorList>
    </citation>
    <scope>NUCLEOTIDE SEQUENCE [LARGE SCALE MRNA]</scope>
    <source>
        <strain>cv. Columbia</strain>
    </source>
</reference>
<reference key="4">
    <citation type="journal article" date="2004" name="Curr. Biol.">
        <title>Competence to respond to floral inductive signals requires the homeobox genes PENNYWISE and POUND-FOOLISH.</title>
        <authorList>
            <person name="Smith H.M.S."/>
            <person name="Campbell B.C.C."/>
            <person name="Hake S."/>
        </authorList>
    </citation>
    <scope>GENE FAMILY ORGANIZATION</scope>
</reference>